<dbReference type="EC" id="2.7.7.3" evidence="1"/>
<dbReference type="EMBL" id="BA000004">
    <property type="protein sequence ID" value="BAB06308.1"/>
    <property type="molecule type" value="Genomic_DNA"/>
</dbReference>
<dbReference type="PIR" id="E83973">
    <property type="entry name" value="E83973"/>
</dbReference>
<dbReference type="RefSeq" id="WP_010898740.1">
    <property type="nucleotide sequence ID" value="NC_002570.2"/>
</dbReference>
<dbReference type="SMR" id="Q9K9Q6"/>
<dbReference type="STRING" id="272558.gene:10728487"/>
<dbReference type="GeneID" id="87598102"/>
<dbReference type="KEGG" id="bha:BH2589"/>
<dbReference type="eggNOG" id="COG0669">
    <property type="taxonomic scope" value="Bacteria"/>
</dbReference>
<dbReference type="HOGENOM" id="CLU_100149_0_1_9"/>
<dbReference type="OrthoDB" id="9806661at2"/>
<dbReference type="UniPathway" id="UPA00241">
    <property type="reaction ID" value="UER00355"/>
</dbReference>
<dbReference type="Proteomes" id="UP000001258">
    <property type="component" value="Chromosome"/>
</dbReference>
<dbReference type="GO" id="GO:0005737">
    <property type="term" value="C:cytoplasm"/>
    <property type="evidence" value="ECO:0007669"/>
    <property type="project" value="UniProtKB-SubCell"/>
</dbReference>
<dbReference type="GO" id="GO:0005524">
    <property type="term" value="F:ATP binding"/>
    <property type="evidence" value="ECO:0007669"/>
    <property type="project" value="UniProtKB-KW"/>
</dbReference>
<dbReference type="GO" id="GO:0004595">
    <property type="term" value="F:pantetheine-phosphate adenylyltransferase activity"/>
    <property type="evidence" value="ECO:0007669"/>
    <property type="project" value="UniProtKB-UniRule"/>
</dbReference>
<dbReference type="GO" id="GO:0015937">
    <property type="term" value="P:coenzyme A biosynthetic process"/>
    <property type="evidence" value="ECO:0007669"/>
    <property type="project" value="UniProtKB-UniRule"/>
</dbReference>
<dbReference type="CDD" id="cd02163">
    <property type="entry name" value="PPAT"/>
    <property type="match status" value="1"/>
</dbReference>
<dbReference type="FunFam" id="3.40.50.620:FF:000012">
    <property type="entry name" value="Phosphopantetheine adenylyltransferase"/>
    <property type="match status" value="1"/>
</dbReference>
<dbReference type="Gene3D" id="3.40.50.620">
    <property type="entry name" value="HUPs"/>
    <property type="match status" value="1"/>
</dbReference>
<dbReference type="HAMAP" id="MF_00151">
    <property type="entry name" value="PPAT_bact"/>
    <property type="match status" value="1"/>
</dbReference>
<dbReference type="InterPro" id="IPR004821">
    <property type="entry name" value="Cyt_trans-like"/>
</dbReference>
<dbReference type="InterPro" id="IPR001980">
    <property type="entry name" value="PPAT"/>
</dbReference>
<dbReference type="InterPro" id="IPR014729">
    <property type="entry name" value="Rossmann-like_a/b/a_fold"/>
</dbReference>
<dbReference type="NCBIfam" id="TIGR01510">
    <property type="entry name" value="coaD_prev_kdtB"/>
    <property type="match status" value="1"/>
</dbReference>
<dbReference type="NCBIfam" id="TIGR00125">
    <property type="entry name" value="cyt_tran_rel"/>
    <property type="match status" value="1"/>
</dbReference>
<dbReference type="PANTHER" id="PTHR21342">
    <property type="entry name" value="PHOSPHOPANTETHEINE ADENYLYLTRANSFERASE"/>
    <property type="match status" value="1"/>
</dbReference>
<dbReference type="PANTHER" id="PTHR21342:SF1">
    <property type="entry name" value="PHOSPHOPANTETHEINE ADENYLYLTRANSFERASE"/>
    <property type="match status" value="1"/>
</dbReference>
<dbReference type="Pfam" id="PF01467">
    <property type="entry name" value="CTP_transf_like"/>
    <property type="match status" value="1"/>
</dbReference>
<dbReference type="PRINTS" id="PR01020">
    <property type="entry name" value="LPSBIOSNTHSS"/>
</dbReference>
<dbReference type="SUPFAM" id="SSF52374">
    <property type="entry name" value="Nucleotidylyl transferase"/>
    <property type="match status" value="1"/>
</dbReference>
<proteinExistence type="inferred from homology"/>
<reference key="1">
    <citation type="journal article" date="2000" name="Nucleic Acids Res.">
        <title>Complete genome sequence of the alkaliphilic bacterium Bacillus halodurans and genomic sequence comparison with Bacillus subtilis.</title>
        <authorList>
            <person name="Takami H."/>
            <person name="Nakasone K."/>
            <person name="Takaki Y."/>
            <person name="Maeno G."/>
            <person name="Sasaki R."/>
            <person name="Masui N."/>
            <person name="Fuji F."/>
            <person name="Hirama C."/>
            <person name="Nakamura Y."/>
            <person name="Ogasawara N."/>
            <person name="Kuhara S."/>
            <person name="Horikoshi K."/>
        </authorList>
    </citation>
    <scope>NUCLEOTIDE SEQUENCE [LARGE SCALE GENOMIC DNA]</scope>
    <source>
        <strain>ATCC BAA-125 / DSM 18197 / FERM 7344 / JCM 9153 / C-125</strain>
    </source>
</reference>
<evidence type="ECO:0000255" key="1">
    <source>
        <dbReference type="HAMAP-Rule" id="MF_00151"/>
    </source>
</evidence>
<gene>
    <name evidence="1" type="primary">coaD</name>
    <name type="synonym">kdtB</name>
    <name type="ordered locus">BH2589</name>
</gene>
<protein>
    <recommendedName>
        <fullName evidence="1">Phosphopantetheine adenylyltransferase</fullName>
        <ecNumber evidence="1">2.7.7.3</ecNumber>
    </recommendedName>
    <alternativeName>
        <fullName evidence="1">Dephospho-CoA pyrophosphorylase</fullName>
    </alternativeName>
    <alternativeName>
        <fullName evidence="1">Pantetheine-phosphate adenylyltransferase</fullName>
        <shortName evidence="1">PPAT</shortName>
    </alternativeName>
</protein>
<feature type="chain" id="PRO_0000156166" description="Phosphopantetheine adenylyltransferase">
    <location>
        <begin position="1"/>
        <end position="165"/>
    </location>
</feature>
<feature type="binding site" evidence="1">
    <location>
        <begin position="10"/>
        <end position="11"/>
    </location>
    <ligand>
        <name>ATP</name>
        <dbReference type="ChEBI" id="CHEBI:30616"/>
    </ligand>
</feature>
<feature type="binding site" evidence="1">
    <location>
        <position position="10"/>
    </location>
    <ligand>
        <name>substrate</name>
    </ligand>
</feature>
<feature type="binding site" evidence="1">
    <location>
        <position position="18"/>
    </location>
    <ligand>
        <name>ATP</name>
        <dbReference type="ChEBI" id="CHEBI:30616"/>
    </ligand>
</feature>
<feature type="binding site" evidence="1">
    <location>
        <position position="42"/>
    </location>
    <ligand>
        <name>substrate</name>
    </ligand>
</feature>
<feature type="binding site" evidence="1">
    <location>
        <position position="74"/>
    </location>
    <ligand>
        <name>substrate</name>
    </ligand>
</feature>
<feature type="binding site" evidence="1">
    <location>
        <position position="88"/>
    </location>
    <ligand>
        <name>substrate</name>
    </ligand>
</feature>
<feature type="binding site" evidence="1">
    <location>
        <begin position="89"/>
        <end position="91"/>
    </location>
    <ligand>
        <name>ATP</name>
        <dbReference type="ChEBI" id="CHEBI:30616"/>
    </ligand>
</feature>
<feature type="binding site" evidence="1">
    <location>
        <position position="99"/>
    </location>
    <ligand>
        <name>ATP</name>
        <dbReference type="ChEBI" id="CHEBI:30616"/>
    </ligand>
</feature>
<feature type="binding site" evidence="1">
    <location>
        <begin position="124"/>
        <end position="130"/>
    </location>
    <ligand>
        <name>ATP</name>
        <dbReference type="ChEBI" id="CHEBI:30616"/>
    </ligand>
</feature>
<feature type="site" description="Transition state stabilizer" evidence="1">
    <location>
        <position position="18"/>
    </location>
</feature>
<name>COAD_HALH5</name>
<comment type="function">
    <text evidence="1">Reversibly transfers an adenylyl group from ATP to 4'-phosphopantetheine, yielding dephospho-CoA (dPCoA) and pyrophosphate.</text>
</comment>
<comment type="catalytic activity">
    <reaction evidence="1">
        <text>(R)-4'-phosphopantetheine + ATP + H(+) = 3'-dephospho-CoA + diphosphate</text>
        <dbReference type="Rhea" id="RHEA:19801"/>
        <dbReference type="ChEBI" id="CHEBI:15378"/>
        <dbReference type="ChEBI" id="CHEBI:30616"/>
        <dbReference type="ChEBI" id="CHEBI:33019"/>
        <dbReference type="ChEBI" id="CHEBI:57328"/>
        <dbReference type="ChEBI" id="CHEBI:61723"/>
        <dbReference type="EC" id="2.7.7.3"/>
    </reaction>
</comment>
<comment type="cofactor">
    <cofactor evidence="1">
        <name>Mg(2+)</name>
        <dbReference type="ChEBI" id="CHEBI:18420"/>
    </cofactor>
</comment>
<comment type="pathway">
    <text evidence="1">Cofactor biosynthesis; coenzyme A biosynthesis; CoA from (R)-pantothenate: step 4/5.</text>
</comment>
<comment type="subunit">
    <text evidence="1">Homohexamer.</text>
</comment>
<comment type="subcellular location">
    <subcellularLocation>
        <location evidence="1">Cytoplasm</location>
    </subcellularLocation>
</comment>
<comment type="similarity">
    <text evidence="1">Belongs to the bacterial CoaD family.</text>
</comment>
<sequence>MTSIAVCPGSFDPVTLGHLDIIQRGANVFDEVIVAVLHNRNKVPLFSVEERLELLKKATEHIPNVTIDSFNGLLIDYVKQKQAKAIIRGLRAVSDFEYEMQAASINKKLGPDVETFFMMTSNQYSYLSSSIVKEVAKYEADVSDIVPPVVAEALKAKFSSSPRNK</sequence>
<accession>Q9K9Q6</accession>
<keyword id="KW-0067">ATP-binding</keyword>
<keyword id="KW-0173">Coenzyme A biosynthesis</keyword>
<keyword id="KW-0963">Cytoplasm</keyword>
<keyword id="KW-0460">Magnesium</keyword>
<keyword id="KW-0547">Nucleotide-binding</keyword>
<keyword id="KW-0548">Nucleotidyltransferase</keyword>
<keyword id="KW-1185">Reference proteome</keyword>
<keyword id="KW-0808">Transferase</keyword>
<organism>
    <name type="scientific">Halalkalibacterium halodurans (strain ATCC BAA-125 / DSM 18197 / FERM 7344 / JCM 9153 / C-125)</name>
    <name type="common">Bacillus halodurans</name>
    <dbReference type="NCBI Taxonomy" id="272558"/>
    <lineage>
        <taxon>Bacteria</taxon>
        <taxon>Bacillati</taxon>
        <taxon>Bacillota</taxon>
        <taxon>Bacilli</taxon>
        <taxon>Bacillales</taxon>
        <taxon>Bacillaceae</taxon>
        <taxon>Halalkalibacterium (ex Joshi et al. 2022)</taxon>
    </lineage>
</organism>